<feature type="chain" id="PRO_0000029983" description="S-adenosylmethionine decarboxylase beta chain" evidence="1">
    <location>
        <begin position="1"/>
        <end position="85"/>
    </location>
</feature>
<feature type="chain" id="PRO_0000029984" description="S-adenosylmethionine decarboxylase alpha chain" evidence="1">
    <location>
        <begin position="86"/>
        <end position="370"/>
    </location>
</feature>
<feature type="active site" evidence="2">
    <location>
        <position position="29"/>
    </location>
</feature>
<feature type="active site" evidence="2">
    <location>
        <position position="32"/>
    </location>
</feature>
<feature type="active site" description="Schiff-base intermediate with substrate; via pyruvic acid" evidence="2">
    <location>
        <position position="86"/>
    </location>
</feature>
<feature type="active site" description="Proton donor; for catalytic activity" evidence="2">
    <location>
        <position position="100"/>
    </location>
</feature>
<feature type="active site" description="Proton acceptor; for processing activity" evidence="2">
    <location>
        <position position="249"/>
    </location>
</feature>
<feature type="active site" description="Proton acceptor; for processing activity" evidence="2">
    <location>
        <position position="262"/>
    </location>
</feature>
<feature type="binding site" evidence="2">
    <location>
        <position position="28"/>
    </location>
    <ligand>
        <name>substrate</name>
    </ligand>
</feature>
<feature type="binding site" evidence="2">
    <location>
        <position position="85"/>
    </location>
    <ligand>
        <name>substrate</name>
    </ligand>
</feature>
<feature type="binding site" evidence="2">
    <location>
        <position position="266"/>
    </location>
    <ligand>
        <name>substrate</name>
    </ligand>
</feature>
<feature type="site" description="Cleavage (non-hydrolytic); by autolysis" evidence="2">
    <location>
        <begin position="85"/>
        <end position="86"/>
    </location>
</feature>
<feature type="modified residue" description="Pyruvic acid (Ser); by autocatalysis" evidence="2">
    <location>
        <position position="86"/>
    </location>
</feature>
<feature type="sequence conflict" description="In Ref. 1; ABQ23690." evidence="5" ref="1">
    <original>FH</original>
    <variation>LD</variation>
    <location>
        <begin position="177"/>
        <end position="178"/>
    </location>
</feature>
<proteinExistence type="evidence at protein level"/>
<evidence type="ECO:0000250" key="1"/>
<evidence type="ECO:0000250" key="2">
    <source>
        <dbReference type="UniProtKB" id="P17707"/>
    </source>
</evidence>
<evidence type="ECO:0000269" key="3">
    <source>
    </source>
</evidence>
<evidence type="ECO:0000269" key="4">
    <source>
    </source>
</evidence>
<evidence type="ECO:0000305" key="5"/>
<dbReference type="EC" id="4.1.1.50" evidence="3 4"/>
<dbReference type="EMBL" id="EF545595">
    <property type="protein sequence ID" value="ABQ23690.1"/>
    <property type="molecule type" value="mRNA"/>
</dbReference>
<dbReference type="EMBL" id="U20092">
    <property type="protein sequence ID" value="AAA61969.1"/>
    <property type="molecule type" value="Genomic_DNA"/>
</dbReference>
<dbReference type="SMR" id="P50244"/>
<dbReference type="ChEMBL" id="CHEMBL4105987"/>
<dbReference type="EnsemblProtists" id="AAZ11999">
    <property type="protein sequence ID" value="AAZ11999"/>
    <property type="gene ID" value="Tb927.6.4410"/>
</dbReference>
<dbReference type="EnsemblProtists" id="AAZ12004">
    <property type="protein sequence ID" value="AAZ12004"/>
    <property type="gene ID" value="Tb927.6.4460"/>
</dbReference>
<dbReference type="OMA" id="WFEESSN"/>
<dbReference type="BRENDA" id="4.1.1.50">
    <property type="organism ID" value="6519"/>
</dbReference>
<dbReference type="SABIO-RK" id="P50244"/>
<dbReference type="UniPathway" id="UPA00331">
    <property type="reaction ID" value="UER00451"/>
</dbReference>
<dbReference type="GO" id="GO:1902494">
    <property type="term" value="C:catalytic complex"/>
    <property type="evidence" value="ECO:0000314"/>
    <property type="project" value="UniProtKB"/>
</dbReference>
<dbReference type="GO" id="GO:0005829">
    <property type="term" value="C:cytosol"/>
    <property type="evidence" value="ECO:0007669"/>
    <property type="project" value="TreeGrafter"/>
</dbReference>
<dbReference type="GO" id="GO:0004014">
    <property type="term" value="F:adenosylmethionine decarboxylase activity"/>
    <property type="evidence" value="ECO:0000314"/>
    <property type="project" value="UniProtKB"/>
</dbReference>
<dbReference type="GO" id="GO:0046982">
    <property type="term" value="F:protein heterodimerization activity"/>
    <property type="evidence" value="ECO:0000353"/>
    <property type="project" value="UniProtKB"/>
</dbReference>
<dbReference type="GO" id="GO:1901307">
    <property type="term" value="P:positive regulation of spermidine biosynthetic process"/>
    <property type="evidence" value="ECO:0000315"/>
    <property type="project" value="UniProtKB"/>
</dbReference>
<dbReference type="GO" id="GO:1905724">
    <property type="term" value="P:positive regulation of trypanothione biosynthetic process"/>
    <property type="evidence" value="ECO:0000315"/>
    <property type="project" value="UniProtKB"/>
</dbReference>
<dbReference type="GO" id="GO:0046499">
    <property type="term" value="P:S-adenosylmethioninamine metabolic process"/>
    <property type="evidence" value="ECO:0000315"/>
    <property type="project" value="UniProtKB"/>
</dbReference>
<dbReference type="GO" id="GO:0046500">
    <property type="term" value="P:S-adenosylmethionine metabolic process"/>
    <property type="evidence" value="ECO:0000314"/>
    <property type="project" value="UniProtKB"/>
</dbReference>
<dbReference type="GO" id="GO:0008295">
    <property type="term" value="P:spermidine biosynthetic process"/>
    <property type="evidence" value="ECO:0007669"/>
    <property type="project" value="UniProtKB-KW"/>
</dbReference>
<dbReference type="GO" id="GO:0006597">
    <property type="term" value="P:spermine biosynthetic process"/>
    <property type="evidence" value="ECO:0007669"/>
    <property type="project" value="InterPro"/>
</dbReference>
<dbReference type="FunFam" id="3.60.90.10:FF:000009">
    <property type="entry name" value="S-adenosylmethionine decarboxylase proenzyme"/>
    <property type="match status" value="1"/>
</dbReference>
<dbReference type="Gene3D" id="3.30.360.50">
    <property type="entry name" value="S-adenosylmethionine decarboxylase"/>
    <property type="match status" value="1"/>
</dbReference>
<dbReference type="Gene3D" id="3.60.90.10">
    <property type="entry name" value="S-adenosylmethionine decarboxylase"/>
    <property type="match status" value="1"/>
</dbReference>
<dbReference type="InterPro" id="IPR048283">
    <property type="entry name" value="AdoMetDC-like"/>
</dbReference>
<dbReference type="InterPro" id="IPR001985">
    <property type="entry name" value="S-AdoMet_decarboxylase_euk"/>
</dbReference>
<dbReference type="InterPro" id="IPR016067">
    <property type="entry name" value="S-AdoMet_deCO2ase_core"/>
</dbReference>
<dbReference type="InterPro" id="IPR018166">
    <property type="entry name" value="S-AdoMet_deCO2ase_CS"/>
</dbReference>
<dbReference type="PANTHER" id="PTHR11570">
    <property type="entry name" value="S-ADENOSYLMETHIONINE DECARBOXYLASE"/>
    <property type="match status" value="1"/>
</dbReference>
<dbReference type="PANTHER" id="PTHR11570:SF0">
    <property type="entry name" value="S-ADENOSYLMETHIONINE DECARBOXYLASE PROENZYME"/>
    <property type="match status" value="1"/>
</dbReference>
<dbReference type="Pfam" id="PF01536">
    <property type="entry name" value="SAM_decarbox"/>
    <property type="match status" value="1"/>
</dbReference>
<dbReference type="PIRSF" id="PIRSF001355">
    <property type="entry name" value="S-AdenosylMet_decarboxylase"/>
    <property type="match status" value="1"/>
</dbReference>
<dbReference type="SUPFAM" id="SSF56276">
    <property type="entry name" value="S-adenosylmethionine decarboxylase"/>
    <property type="match status" value="1"/>
</dbReference>
<dbReference type="PROSITE" id="PS01336">
    <property type="entry name" value="ADOMETDC"/>
    <property type="match status" value="1"/>
</dbReference>
<name>DCAMC_TRYBB</name>
<accession>P50244</accession>
<accession>A5HNV7</accession>
<reference key="1">
    <citation type="journal article" date="2007" name="Proc. Natl. Acad. Sci. U.S.A.">
        <title>Allosteric regulation of an essential trypanosome polyamine biosynthetic enzyme by a catalytically dead homolog.</title>
        <authorList>
            <person name="Willert E.K."/>
            <person name="Fitzpatrick R."/>
            <person name="Phillips M.A."/>
        </authorList>
    </citation>
    <scope>NUCLEOTIDE SEQUENCE [MRNA]</scope>
    <scope>FUNCTION</scope>
    <scope>CATALYTIC ACTIVITY</scope>
    <scope>ACTIVITY REGULATION</scope>
    <scope>BIOPHYSICOCHEMICAL PROPERTIES</scope>
    <scope>PATHWAY</scope>
    <scope>INTERACTION WITH ADOMETDC PROZYME</scope>
    <scope>PROTEOLYTIC CLEAVAGE</scope>
    <scope>DEVELOPMENTAL STAGE</scope>
    <source>
        <strain>427</strain>
    </source>
</reference>
<reference key="2">
    <citation type="submission" date="1995-01" db="EMBL/GenBank/DDBJ databases">
        <title>Molecular cloning and functional expression of the S-adenosylmethionine decarboxylase gene of Leishmania donovani and Trypanosoma brucei.</title>
        <authorList>
            <person name="Scott J.R."/>
            <person name="Ullman B."/>
        </authorList>
    </citation>
    <scope>NUCLEOTIDE SEQUENCE [GENOMIC DNA]</scope>
    <source>
        <strain>EATRO 164</strain>
    </source>
</reference>
<reference key="3">
    <citation type="journal article" date="2008" name="PLoS Pathog.">
        <title>Regulated expression of an essential allosteric activator of polyamine biosynthesis in African trypanosomes.</title>
        <authorList>
            <person name="Willert E.K."/>
            <person name="Phillips M.A."/>
        </authorList>
    </citation>
    <scope>FUNCTION</scope>
    <scope>CATALYTIC ACTIVITY</scope>
    <scope>PATHWAY</scope>
    <scope>DISRUPTION PHENOTYPE</scope>
</reference>
<keyword id="KW-0068">Autocatalytic cleavage</keyword>
<keyword id="KW-0210">Decarboxylase</keyword>
<keyword id="KW-0456">Lyase</keyword>
<keyword id="KW-0620">Polyamine biosynthesis</keyword>
<keyword id="KW-0670">Pyruvate</keyword>
<keyword id="KW-0949">S-adenosyl-L-methionine</keyword>
<keyword id="KW-0704">Schiff base</keyword>
<keyword id="KW-0745">Spermidine biosynthesis</keyword>
<keyword id="KW-0865">Zymogen</keyword>
<organism>
    <name type="scientific">Trypanosoma brucei brucei</name>
    <dbReference type="NCBI Taxonomy" id="5702"/>
    <lineage>
        <taxon>Eukaryota</taxon>
        <taxon>Discoba</taxon>
        <taxon>Euglenozoa</taxon>
        <taxon>Kinetoplastea</taxon>
        <taxon>Metakinetoplastina</taxon>
        <taxon>Trypanosomatida</taxon>
        <taxon>Trypanosomatidae</taxon>
        <taxon>Trypanosoma</taxon>
    </lineage>
</organism>
<protein>
    <recommendedName>
        <fullName>S-adenosylmethionine decarboxylase proenzyme</fullName>
        <shortName>AdoMetDC</shortName>
        <shortName>SAMDC</shortName>
        <ecNumber evidence="3 4">4.1.1.50</ecNumber>
    </recommendedName>
    <component>
        <recommendedName>
            <fullName>S-adenosylmethionine decarboxylase alpha chain</fullName>
        </recommendedName>
    </component>
    <component>
        <recommendedName>
            <fullName>S-adenosylmethionine decarboxylase beta chain</fullName>
        </recommendedName>
    </component>
</protein>
<comment type="function">
    <text evidence="3 4">In association with the catalytically inactive AdoMetDC prozyme, catalyzes the decarboxylation of S-adenosyl-L-methionine which is essential for the biosynthesis of the polyamine spermidine. Required for growth and survival during the bloodstream life cycle stage (PubMed:18949025).</text>
</comment>
<comment type="catalytic activity">
    <reaction evidence="3 4">
        <text>S-adenosyl-L-methionine + H(+) = S-adenosyl 3-(methylsulfanyl)propylamine + CO2</text>
        <dbReference type="Rhea" id="RHEA:15981"/>
        <dbReference type="ChEBI" id="CHEBI:15378"/>
        <dbReference type="ChEBI" id="CHEBI:16526"/>
        <dbReference type="ChEBI" id="CHEBI:57443"/>
        <dbReference type="ChEBI" id="CHEBI:59789"/>
        <dbReference type="EC" id="4.1.1.50"/>
    </reaction>
</comment>
<comment type="cofactor">
    <cofactor>
        <name>pyruvate</name>
        <dbReference type="ChEBI" id="CHEBI:15361"/>
    </cofactor>
    <text>Binds 1 pyruvoyl group covalently per subunit.</text>
</comment>
<comment type="activity regulation">
    <text evidence="3">Allosterically activated by AdoMetDC prozyme. Activated by putrescine and to a lesser extent by spermidine, norspermidine and spermine. Inhibited by 5'-([(Z)-4-amino-2-butenyl]methylamino)-5'-deoxyadenosine (MDL 73811).</text>
</comment>
<comment type="biophysicochemical properties">
    <kinetics>
        <KM evidence="3">0.38 mM for S-adenosyl-L-methionine (at 37 degrees Celsius)</KM>
        <KM evidence="3">0.24 mM for S-adenosyl-L-methionine (in presence of putrescine and at 37 degrees Celsius)</KM>
        <KM evidence="3">0.11 mM for S-adenosyl-L-methionine (in presence of AdoMetDC prozyme and at 37 degrees Celsius)</KM>
        <KM evidence="3">0.17 mM for S-adenosyl-L-methionine (in presence of AdoMetDC prozyme and putrescine and at 37 degrees Celsius)</KM>
    </kinetics>
</comment>
<comment type="pathway">
    <text evidence="3 4">Amine and polyamine biosynthesis; S-adenosylmethioninamine biosynthesis; S-adenosylmethioninamine from S-adenosyl-L-methionine: step 1/1.</text>
</comment>
<comment type="subunit">
    <text evidence="3">Forms a heterodimer with catalytically inactive AdoMetDC prozyme; heterodimerization is required to activate AdoMetDC.</text>
</comment>
<comment type="developmental stage">
    <text evidence="3">Expressed during both bloodstream (BF) and procyclic insect (PF) life cycle stages.</text>
</comment>
<comment type="PTM">
    <text evidence="2 3">Is synthesized initially as an inactive proenzyme (PubMed:17485680). Formation of the active enzyme involves a self-maturation process in which the active site pyruvoyl group is generated from an internal serine residue via an autocatalytic post-translational modification (By similarity). Two non-identical subunits are generated from the proenzyme in this reaction, and the pyruvate is formed at the N-terminus of the alpha chain, which is derived from the carboxyl end of the proenzyme (By similarity). The post-translation cleavage follows an unusual pathway, termed non-hydrolytic serinolysis, in which the side chain hydroxyl group of the serine supplies its oxygen atom to form the C-terminus of the beta chain, while the remainder of the serine residue undergoes an oxidative deamination to produce ammonia and the pyruvoyl group blocking the N-terminus of the alpha chain (By similarity).</text>
</comment>
<comment type="disruption phenotype">
    <text evidence="4">RNAi-mediated knockdown causes cell growth arrest followed by death. Putrescine levels are increased and the production of spermidine, glutathionyl-spermidine and trypanothione is severely reduced. In addition, expression levels of AdoMetDC prozyme and ornithine carboxylase (ODC) are increased.</text>
</comment>
<comment type="similarity">
    <text evidence="5">Belongs to the eukaryotic AdoMetDC family.</text>
</comment>
<sequence length="370" mass="41748">MSSCKDSLSLMAMWGSIARFDPKHERSFEGPEKRLEVIMRVVDGTHVSGLLAHDDDVWQKVIDAICAHIVSREFNEYIRSYVLSESSLFVMKDRVILITCGTITLLNCVPLICEAVSTVCGEVEWVSFMHKNYSFPWEQKGPHLSMAEEFKTLRSHFPSGQPFIFGPIDSDHYFLYFHSDVVQPSCSDDAQLSMTMYGLDRNQTKHWYSDKMLPTGPETAVIREATGLSEVVDDSWILHDLQYEPCGYSINAIRGSEYQTIHITPEEHCSFASYETNTCALNYSKCICGVLRVFDPERFSVIVFIDPDSAVGKSYHSGGTIGVEPEYYPNYEAHHRTVNEYTPGHWVLKVNYVKRAVGTVGTSAASGAKE</sequence>